<evidence type="ECO:0000250" key="1">
    <source>
        <dbReference type="UniProtKB" id="P01942"/>
    </source>
</evidence>
<evidence type="ECO:0000250" key="2">
    <source>
        <dbReference type="UniProtKB" id="P01946"/>
    </source>
</evidence>
<evidence type="ECO:0000250" key="3">
    <source>
        <dbReference type="UniProtKB" id="P69905"/>
    </source>
</evidence>
<evidence type="ECO:0000255" key="4">
    <source>
        <dbReference type="PROSITE-ProRule" id="PRU00238"/>
    </source>
</evidence>
<evidence type="ECO:0000269" key="5">
    <source>
    </source>
</evidence>
<evidence type="ECO:0000269" key="6">
    <source>
    </source>
</evidence>
<evidence type="ECO:0000269" key="7">
    <source>
    </source>
</evidence>
<evidence type="ECO:0007829" key="8">
    <source>
        <dbReference type="PDB" id="1NS6"/>
    </source>
</evidence>
<evidence type="ECO:0007829" key="9">
    <source>
        <dbReference type="PDB" id="2D5X"/>
    </source>
</evidence>
<feature type="initiator methionine" description="Removed" evidence="7">
    <location>
        <position position="1"/>
    </location>
</feature>
<feature type="chain" id="PRO_0000052652" description="Hemoglobin subunit alpha">
    <location>
        <begin position="2"/>
        <end position="142"/>
    </location>
</feature>
<feature type="peptide" id="PRO_0000455881" description="Hemopressin" evidence="2">
    <location>
        <begin position="96"/>
        <end position="104"/>
    </location>
</feature>
<feature type="domain" description="Globin" evidence="4">
    <location>
        <begin position="2"/>
        <end position="142"/>
    </location>
</feature>
<feature type="binding site" evidence="4">
    <location>
        <position position="59"/>
    </location>
    <ligand>
        <name>O2</name>
        <dbReference type="ChEBI" id="CHEBI:15379"/>
    </ligand>
</feature>
<feature type="binding site" description="proximal binding residue" evidence="4">
    <location>
        <position position="88"/>
    </location>
    <ligand>
        <name>heme b</name>
        <dbReference type="ChEBI" id="CHEBI:60344"/>
    </ligand>
    <ligandPart>
        <name>Fe</name>
        <dbReference type="ChEBI" id="CHEBI:18248"/>
    </ligandPart>
</feature>
<feature type="modified residue" description="Phosphoserine" evidence="3">
    <location>
        <position position="4"/>
    </location>
</feature>
<feature type="modified residue" description="N6-succinyllysine" evidence="1">
    <location>
        <position position="8"/>
    </location>
</feature>
<feature type="modified residue" description="Phosphothreonine" evidence="3">
    <location>
        <position position="9"/>
    </location>
</feature>
<feature type="modified residue" description="N6-succinyllysine" evidence="1">
    <location>
        <position position="12"/>
    </location>
</feature>
<feature type="modified residue" description="N6-acetyllysine; alternate" evidence="3">
    <location>
        <position position="17"/>
    </location>
</feature>
<feature type="modified residue" description="N6-succinyllysine; alternate" evidence="1">
    <location>
        <position position="17"/>
    </location>
</feature>
<feature type="modified residue" description="Phosphotyrosine" evidence="3">
    <location>
        <position position="25"/>
    </location>
</feature>
<feature type="modified residue" description="N6-succinyllysine" evidence="1">
    <location>
        <position position="41"/>
    </location>
</feature>
<feature type="modified residue" description="Phosphoserine" evidence="3">
    <location>
        <position position="50"/>
    </location>
</feature>
<feature type="modified residue" description="Phosphoserine" evidence="1">
    <location>
        <position position="103"/>
    </location>
</feature>
<feature type="modified residue" description="Phosphothreonine" evidence="1">
    <location>
        <position position="109"/>
    </location>
</feature>
<feature type="modified residue" description="Phosphoserine" evidence="1">
    <location>
        <position position="125"/>
    </location>
</feature>
<feature type="modified residue" description="Phosphoserine" evidence="1">
    <location>
        <position position="132"/>
    </location>
</feature>
<feature type="modified residue" description="Phosphothreonine" evidence="1">
    <location>
        <position position="135"/>
    </location>
</feature>
<feature type="modified residue" description="Phosphothreonine" evidence="1">
    <location>
        <position position="138"/>
    </location>
</feature>
<feature type="modified residue" description="Phosphoserine" evidence="1">
    <location>
        <position position="139"/>
    </location>
</feature>
<feature type="sequence variant" description="Exist in both chains.">
    <original>Y</original>
    <variation>F</variation>
    <location>
        <position position="25"/>
    </location>
</feature>
<feature type="sequence variant" description="In fast chain." evidence="5 6">
    <original>K</original>
    <variation>Q</variation>
    <location>
        <position position="61"/>
    </location>
</feature>
<feature type="helix" evidence="9">
    <location>
        <begin position="5"/>
        <end position="17"/>
    </location>
</feature>
<feature type="turn" evidence="9">
    <location>
        <begin position="18"/>
        <end position="20"/>
    </location>
</feature>
<feature type="helix" evidence="9">
    <location>
        <begin position="22"/>
        <end position="36"/>
    </location>
</feature>
<feature type="helix" evidence="9">
    <location>
        <begin position="38"/>
        <end position="43"/>
    </location>
</feature>
<feature type="helix" evidence="8">
    <location>
        <begin position="46"/>
        <end position="50"/>
    </location>
</feature>
<feature type="helix" evidence="9">
    <location>
        <begin position="54"/>
        <end position="71"/>
    </location>
</feature>
<feature type="helix" evidence="9">
    <location>
        <begin position="72"/>
        <end position="76"/>
    </location>
</feature>
<feature type="helix" evidence="9">
    <location>
        <begin position="77"/>
        <end position="80"/>
    </location>
</feature>
<feature type="helix" evidence="9">
    <location>
        <begin position="82"/>
        <end position="90"/>
    </location>
</feature>
<feature type="helix" evidence="9">
    <location>
        <begin position="96"/>
        <end position="113"/>
    </location>
</feature>
<feature type="turn" evidence="9">
    <location>
        <begin position="115"/>
        <end position="117"/>
    </location>
</feature>
<feature type="helix" evidence="9">
    <location>
        <begin position="120"/>
        <end position="137"/>
    </location>
</feature>
<feature type="turn" evidence="9">
    <location>
        <begin position="138"/>
        <end position="140"/>
    </location>
</feature>
<reference key="1">
    <citation type="journal article" date="1984" name="Nucleic Acids Res.">
        <title>Genetic organization of the polymorphic equine alpha globin locus and sequence of the BII alpha 1 gene.</title>
        <authorList>
            <person name="Clegg J.B."/>
            <person name="Goodbourn S.E.Y."/>
            <person name="Braend M."/>
        </authorList>
    </citation>
    <scope>NUCLEOTIDE SEQUENCE [GENOMIC DNA]</scope>
</reference>
<reference key="2">
    <citation type="journal article" date="1987" name="Mol. Biol. Evol.">
        <title>Gene conversions in the horse alpha-globin gene complex.</title>
        <authorList>
            <person name="Clegg J.B."/>
        </authorList>
    </citation>
    <scope>NUCLEOTIDE SEQUENCE [GENOMIC DNA]</scope>
</reference>
<reference key="3">
    <citation type="journal article" date="1980" name="Hoppe-Seyler's Z. Physiol. Chem.">
        <title>Hemoglobins, XXXIII. Note on the sequence of the hemoglobins of the horse.</title>
        <authorList>
            <person name="Matsuda G."/>
            <person name="Maita T."/>
            <person name="Braunitzer G."/>
            <person name="Schrank B."/>
        </authorList>
    </citation>
    <scope>PROTEIN SEQUENCE OF 2-142</scope>
</reference>
<reference key="4">
    <citation type="journal article" date="1976" name="J. Mol. Biol.">
        <title>A correction to the sequence of the alpha chains of horse haemoglobin.</title>
        <authorList>
            <person name="Ladner R.C."/>
            <person name="Air G.M."/>
            <person name="Fogg J.H."/>
        </authorList>
    </citation>
    <scope>SEQUENCE REVISION</scope>
</reference>
<reference key="5">
    <citation type="journal article" date="1968" name="Nature">
        <title>Three-dimensional Fourier synthesis of horse oxyhaemoglobin at 2.8-A resolution: (1) X-ray analysis.</title>
        <authorList>
            <person name="Perutz M.F."/>
            <person name="Miurhead H."/>
            <person name="Cox J.M."/>
            <person name="Goaman L.C."/>
            <person name="Mathews F.S."/>
            <person name="McGandy E.L."/>
            <person name="Webb L.E."/>
        </authorList>
    </citation>
    <scope>X-RAY CRYSTALLOGRAPHY (2.8 ANGSTROMS)</scope>
</reference>
<reference key="6">
    <citation type="journal article" date="1968" name="Nature">
        <title>Three-dimensional Fourier synthesis of horse oxyhaemoglobin at 2.8 A resolution: the atomic model.</title>
        <authorList>
            <person name="Perutz M.F."/>
            <person name="Muirhead H."/>
            <person name="Cox J.M."/>
            <person name="Goaman L.C."/>
        </authorList>
    </citation>
    <scope>X-RAY CRYSTALLOGRAPHY (2.8 ANGSTROMS)</scope>
</reference>
<reference key="7">
    <citation type="journal article" date="1977" name="J. Mol. Biol.">
        <title>The structure of horse methaemoglobin at 2.0-A resolution.</title>
        <authorList>
            <person name="Ladner R.C."/>
            <person name="Heidner E.J."/>
            <person name="Perutz M.F."/>
        </authorList>
    </citation>
    <scope>X-RAY CRYSTALLOGRAPHY (2.0 ANGSTROMS)</scope>
</reference>
<keyword id="KW-0002">3D-structure</keyword>
<keyword id="KW-0007">Acetylation</keyword>
<keyword id="KW-0903">Direct protein sequencing</keyword>
<keyword id="KW-0349">Heme</keyword>
<keyword id="KW-0408">Iron</keyword>
<keyword id="KW-0479">Metal-binding</keyword>
<keyword id="KW-0561">Oxygen transport</keyword>
<keyword id="KW-0597">Phosphoprotein</keyword>
<keyword id="KW-1185">Reference proteome</keyword>
<keyword id="KW-0813">Transport</keyword>
<gene>
    <name type="primary">HBA</name>
</gene>
<organism>
    <name type="scientific">Equus caballus</name>
    <name type="common">Horse</name>
    <dbReference type="NCBI Taxonomy" id="9796"/>
    <lineage>
        <taxon>Eukaryota</taxon>
        <taxon>Metazoa</taxon>
        <taxon>Chordata</taxon>
        <taxon>Craniata</taxon>
        <taxon>Vertebrata</taxon>
        <taxon>Euteleostomi</taxon>
        <taxon>Mammalia</taxon>
        <taxon>Eutheria</taxon>
        <taxon>Laurasiatheria</taxon>
        <taxon>Perissodactyla</taxon>
        <taxon>Equidae</taxon>
        <taxon>Equus</taxon>
    </lineage>
</organism>
<name>HBA_HORSE</name>
<protein>
    <recommendedName>
        <fullName>Hemoglobin subunit alpha</fullName>
    </recommendedName>
    <alternativeName>
        <fullName>Alpha-globin</fullName>
    </alternativeName>
    <alternativeName>
        <fullName>Hemoglobin alpha chain</fullName>
    </alternativeName>
    <component>
        <recommendedName>
            <fullName evidence="2">Hemopressin</fullName>
        </recommendedName>
    </component>
</protein>
<dbReference type="EMBL" id="X01086">
    <property type="protein sequence ID" value="CAA25564.1"/>
    <property type="molecule type" value="Genomic_DNA"/>
</dbReference>
<dbReference type="EMBL" id="M17902">
    <property type="protein sequence ID" value="AAD15306.1"/>
    <property type="molecule type" value="Genomic_DNA"/>
</dbReference>
<dbReference type="EMBL" id="M17903">
    <property type="protein sequence ID" value="AAA30948.1"/>
    <property type="molecule type" value="Genomic_DNA"/>
</dbReference>
<dbReference type="EMBL" id="X07053">
    <property type="protein sequence ID" value="CAA30097.1"/>
    <property type="molecule type" value="Genomic_DNA"/>
</dbReference>
<dbReference type="PIR" id="I46302">
    <property type="entry name" value="HAHO"/>
</dbReference>
<dbReference type="RefSeq" id="NP_001078901.1">
    <property type="nucleotide sequence ID" value="NM_001085432.1"/>
</dbReference>
<dbReference type="PDB" id="1G0B">
    <property type="method" value="X-ray"/>
    <property type="resolution" value="1.90 A"/>
    <property type="chains" value="A=2-142"/>
</dbReference>
<dbReference type="PDB" id="1IBE">
    <property type="method" value="X-ray"/>
    <property type="resolution" value="1.80 A"/>
    <property type="chains" value="A=2-142"/>
</dbReference>
<dbReference type="PDB" id="1IWH">
    <property type="method" value="X-ray"/>
    <property type="resolution" value="1.55 A"/>
    <property type="chains" value="A=2-142"/>
</dbReference>
<dbReference type="PDB" id="1NS6">
    <property type="method" value="X-ray"/>
    <property type="resolution" value="2.05 A"/>
    <property type="chains" value="A=2-142"/>
</dbReference>
<dbReference type="PDB" id="1NS9">
    <property type="method" value="X-ray"/>
    <property type="resolution" value="1.60 A"/>
    <property type="chains" value="A=2-142"/>
</dbReference>
<dbReference type="PDB" id="1Y8H">
    <property type="method" value="X-ray"/>
    <property type="resolution" value="3.10 A"/>
    <property type="chains" value="A/C=2-142"/>
</dbReference>
<dbReference type="PDB" id="1Y8I">
    <property type="method" value="X-ray"/>
    <property type="resolution" value="2.60 A"/>
    <property type="chains" value="A/C=2-142"/>
</dbReference>
<dbReference type="PDB" id="1Y8K">
    <property type="method" value="X-ray"/>
    <property type="resolution" value="2.30 A"/>
    <property type="chains" value="A/C=2-142"/>
</dbReference>
<dbReference type="PDB" id="2D5X">
    <property type="method" value="X-ray"/>
    <property type="resolution" value="1.45 A"/>
    <property type="chains" value="A=2-142"/>
</dbReference>
<dbReference type="PDB" id="2DHB">
    <property type="method" value="X-ray"/>
    <property type="resolution" value="2.80 A"/>
    <property type="chains" value="A=2-142"/>
</dbReference>
<dbReference type="PDB" id="2MHB">
    <property type="method" value="X-ray"/>
    <property type="resolution" value="2.00 A"/>
    <property type="chains" value="A=2-142"/>
</dbReference>
<dbReference type="PDB" id="2ZLT">
    <property type="method" value="X-ray"/>
    <property type="resolution" value="1.90 A"/>
    <property type="chains" value="A=2-142"/>
</dbReference>
<dbReference type="PDB" id="2ZLU">
    <property type="method" value="X-ray"/>
    <property type="resolution" value="2.00 A"/>
    <property type="chains" value="A=2-142"/>
</dbReference>
<dbReference type="PDB" id="2ZLV">
    <property type="method" value="X-ray"/>
    <property type="resolution" value="2.00 A"/>
    <property type="chains" value="A=2-142"/>
</dbReference>
<dbReference type="PDB" id="2ZLW">
    <property type="method" value="X-ray"/>
    <property type="resolution" value="2.90 A"/>
    <property type="chains" value="A/C=2-142"/>
</dbReference>
<dbReference type="PDB" id="2ZLX">
    <property type="method" value="X-ray"/>
    <property type="resolution" value="2.80 A"/>
    <property type="chains" value="A/C=2-142"/>
</dbReference>
<dbReference type="PDB" id="5C6E">
    <property type="method" value="Other"/>
    <property type="resolution" value="1.70 A"/>
    <property type="chains" value="A=2-142"/>
</dbReference>
<dbReference type="PDB" id="6R2O">
    <property type="method" value="X-ray"/>
    <property type="resolution" value="2.46 A"/>
    <property type="chains" value="A/C=2-142"/>
</dbReference>
<dbReference type="PDB" id="6SVA">
    <property type="method" value="X-ray"/>
    <property type="resolution" value="1.92 A"/>
    <property type="chains" value="A=2-141"/>
</dbReference>
<dbReference type="PDB" id="8PUQ">
    <property type="method" value="X-ray"/>
    <property type="resolution" value="1.95 A"/>
    <property type="chains" value="A=2-141"/>
</dbReference>
<dbReference type="PDB" id="8PUR">
    <property type="method" value="X-ray"/>
    <property type="resolution" value="1.85 A"/>
    <property type="chains" value="A=2-142"/>
</dbReference>
<dbReference type="PDBsum" id="1G0B"/>
<dbReference type="PDBsum" id="1IBE"/>
<dbReference type="PDBsum" id="1IWH"/>
<dbReference type="PDBsum" id="1NS6"/>
<dbReference type="PDBsum" id="1NS9"/>
<dbReference type="PDBsum" id="1Y8H"/>
<dbReference type="PDBsum" id="1Y8I"/>
<dbReference type="PDBsum" id="1Y8K"/>
<dbReference type="PDBsum" id="2D5X"/>
<dbReference type="PDBsum" id="2DHB"/>
<dbReference type="PDBsum" id="2MHB"/>
<dbReference type="PDBsum" id="2ZLT"/>
<dbReference type="PDBsum" id="2ZLU"/>
<dbReference type="PDBsum" id="2ZLV"/>
<dbReference type="PDBsum" id="2ZLW"/>
<dbReference type="PDBsum" id="2ZLX"/>
<dbReference type="PDBsum" id="5C6E"/>
<dbReference type="PDBsum" id="6R2O"/>
<dbReference type="PDBsum" id="6SVA"/>
<dbReference type="PDBsum" id="8PUQ"/>
<dbReference type="PDBsum" id="8PUR"/>
<dbReference type="SMR" id="P01958"/>
<dbReference type="FunCoup" id="P01958">
    <property type="interactions" value="65"/>
</dbReference>
<dbReference type="MINT" id="P01958"/>
<dbReference type="STRING" id="9796.ENSECAP00000043334"/>
<dbReference type="PaxDb" id="9796-ENSECAP00000043334"/>
<dbReference type="PeptideAtlas" id="P01958"/>
<dbReference type="GeneID" id="100036557"/>
<dbReference type="KEGG" id="ecb:100036557"/>
<dbReference type="CTD" id="15121"/>
<dbReference type="InParanoid" id="P01958"/>
<dbReference type="OrthoDB" id="8751793at2759"/>
<dbReference type="EvolutionaryTrace" id="P01958"/>
<dbReference type="Proteomes" id="UP000002281">
    <property type="component" value="Unplaced"/>
</dbReference>
<dbReference type="GO" id="GO:0031838">
    <property type="term" value="C:haptoglobin-hemoglobin complex"/>
    <property type="evidence" value="ECO:0000318"/>
    <property type="project" value="GO_Central"/>
</dbReference>
<dbReference type="GO" id="GO:0005833">
    <property type="term" value="C:hemoglobin complex"/>
    <property type="evidence" value="ECO:0000318"/>
    <property type="project" value="GO_Central"/>
</dbReference>
<dbReference type="GO" id="GO:0020037">
    <property type="term" value="F:heme binding"/>
    <property type="evidence" value="ECO:0000318"/>
    <property type="project" value="GO_Central"/>
</dbReference>
<dbReference type="GO" id="GO:0005506">
    <property type="term" value="F:iron ion binding"/>
    <property type="evidence" value="ECO:0007669"/>
    <property type="project" value="InterPro"/>
</dbReference>
<dbReference type="GO" id="GO:0019825">
    <property type="term" value="F:oxygen binding"/>
    <property type="evidence" value="ECO:0000318"/>
    <property type="project" value="GO_Central"/>
</dbReference>
<dbReference type="GO" id="GO:0005344">
    <property type="term" value="F:oxygen carrier activity"/>
    <property type="evidence" value="ECO:0000318"/>
    <property type="project" value="GO_Central"/>
</dbReference>
<dbReference type="GO" id="GO:0098869">
    <property type="term" value="P:cellular oxidant detoxification"/>
    <property type="evidence" value="ECO:0007669"/>
    <property type="project" value="GOC"/>
</dbReference>
<dbReference type="GO" id="GO:0042744">
    <property type="term" value="P:hydrogen peroxide catabolic process"/>
    <property type="evidence" value="ECO:0000318"/>
    <property type="project" value="GO_Central"/>
</dbReference>
<dbReference type="CDD" id="cd08927">
    <property type="entry name" value="Hb-alpha-like"/>
    <property type="match status" value="1"/>
</dbReference>
<dbReference type="FunFam" id="1.10.490.10:FF:000002">
    <property type="entry name" value="Hemoglobin subunit alpha"/>
    <property type="match status" value="1"/>
</dbReference>
<dbReference type="Gene3D" id="1.10.490.10">
    <property type="entry name" value="Globins"/>
    <property type="match status" value="1"/>
</dbReference>
<dbReference type="InterPro" id="IPR000971">
    <property type="entry name" value="Globin"/>
</dbReference>
<dbReference type="InterPro" id="IPR009050">
    <property type="entry name" value="Globin-like_sf"/>
</dbReference>
<dbReference type="InterPro" id="IPR012292">
    <property type="entry name" value="Globin/Proto"/>
</dbReference>
<dbReference type="InterPro" id="IPR002338">
    <property type="entry name" value="Hemoglobin_a-typ"/>
</dbReference>
<dbReference type="InterPro" id="IPR050056">
    <property type="entry name" value="Hemoglobin_oxygen_transport"/>
</dbReference>
<dbReference type="InterPro" id="IPR002339">
    <property type="entry name" value="Hemoglobin_pi"/>
</dbReference>
<dbReference type="PANTHER" id="PTHR11442">
    <property type="entry name" value="HEMOGLOBIN FAMILY MEMBER"/>
    <property type="match status" value="1"/>
</dbReference>
<dbReference type="PANTHER" id="PTHR11442:SF48">
    <property type="entry name" value="HEMOGLOBIN SUBUNIT ALPHA"/>
    <property type="match status" value="1"/>
</dbReference>
<dbReference type="Pfam" id="PF00042">
    <property type="entry name" value="Globin"/>
    <property type="match status" value="1"/>
</dbReference>
<dbReference type="PRINTS" id="PR00612">
    <property type="entry name" value="ALPHAHAEM"/>
</dbReference>
<dbReference type="PRINTS" id="PR00815">
    <property type="entry name" value="PIHAEM"/>
</dbReference>
<dbReference type="SUPFAM" id="SSF46458">
    <property type="entry name" value="Globin-like"/>
    <property type="match status" value="1"/>
</dbReference>
<dbReference type="PROSITE" id="PS01033">
    <property type="entry name" value="GLOBIN"/>
    <property type="match status" value="1"/>
</dbReference>
<proteinExistence type="evidence at protein level"/>
<sequence>MVLSAADKTNVKAAWSKVGGHAGEYGAEALERMFLGFPTTKTYFPHFDLSHGSAQVKAHGKKVGDALTLAVGHLDDLPGALSNLSDLHAHKLRVDPVNFKLLSHCLLSTLAVHLPNDFTPAVHASLDKFLSSVSTVLTSKYR</sequence>
<comment type="function">
    <text>Involved in oxygen transport from the lung to the various peripheral tissues.</text>
</comment>
<comment type="function">
    <molecule>Hemopressin</molecule>
    <text evidence="2">Hemopressin acts as an antagonist peptide of the cannabinoid receptor CNR1. Hemopressin-binding efficiently blocks cannabinoid receptor CNR1 and subsequent signaling.</text>
</comment>
<comment type="subunit">
    <text>Heterotetramer of two alpha chains and two beta chains.</text>
</comment>
<comment type="tissue specificity">
    <text>Red blood cells.</text>
</comment>
<comment type="polymorphism">
    <text evidence="5 6">Horse has two non-allelic alpha chains, slow and fast. The slow chain sequence is shown.</text>
</comment>
<comment type="similarity">
    <text evidence="4">Belongs to the globin family.</text>
</comment>
<comment type="online information" name="Protein Spotlight">
    <link uri="https://www.proteinspotlight.org/back_issues/021"/>
    <text>The man behind the molecular lung - Issue 21 of April 2002</text>
</comment>
<accession>P01958</accession>
<accession>Q28384</accession>